<protein>
    <recommendedName>
        <fullName evidence="1">Peptidyl-tRNA hydrolase</fullName>
        <shortName evidence="1">Pth</shortName>
        <ecNumber evidence="1">3.1.1.29</ecNumber>
    </recommendedName>
</protein>
<keyword id="KW-0963">Cytoplasm</keyword>
<keyword id="KW-0378">Hydrolase</keyword>
<keyword id="KW-0694">RNA-binding</keyword>
<keyword id="KW-0820">tRNA-binding</keyword>
<organism>
    <name type="scientific">Methylacidiphilum infernorum (isolate V4)</name>
    <name type="common">Methylokorus infernorum (strain V4)</name>
    <dbReference type="NCBI Taxonomy" id="481448"/>
    <lineage>
        <taxon>Bacteria</taxon>
        <taxon>Pseudomonadati</taxon>
        <taxon>Verrucomicrobiota</taxon>
        <taxon>Methylacidiphilae</taxon>
        <taxon>Methylacidiphilales</taxon>
        <taxon>Methylacidiphilaceae</taxon>
        <taxon>Methylacidiphilum (ex Ratnadevi et al. 2023)</taxon>
    </lineage>
</organism>
<accession>B3E0Q7</accession>
<proteinExistence type="inferred from homology"/>
<sequence>MGVFHIVVGLGNPGQEYEKTRHNIGWRVVEELVKRQNLSFKIDKKAKSKVAFKEKLVFVLPLTYMNLSGQALSYLLQKEKCSSKDILVILDDISLPLGKLRFRPKGSSGGHKGLESIIEELHTEDIPRLRLGIGPLPEGEQLADYVLKPFLEEEKDKVEEMILKAIQFFECLQKEGIEIALNKLSA</sequence>
<gene>
    <name evidence="1" type="primary">pth</name>
    <name type="ordered locus">Minf_0756</name>
</gene>
<dbReference type="EC" id="3.1.1.29" evidence="1"/>
<dbReference type="EMBL" id="CP000975">
    <property type="protein sequence ID" value="ACD82811.1"/>
    <property type="molecule type" value="Genomic_DNA"/>
</dbReference>
<dbReference type="RefSeq" id="WP_012463093.1">
    <property type="nucleotide sequence ID" value="NC_010794.1"/>
</dbReference>
<dbReference type="SMR" id="B3E0Q7"/>
<dbReference type="STRING" id="481448.Minf_0756"/>
<dbReference type="KEGG" id="min:Minf_0756"/>
<dbReference type="eggNOG" id="COG0193">
    <property type="taxonomic scope" value="Bacteria"/>
</dbReference>
<dbReference type="HOGENOM" id="CLU_062456_4_1_0"/>
<dbReference type="OrthoDB" id="9800507at2"/>
<dbReference type="Proteomes" id="UP000009149">
    <property type="component" value="Chromosome"/>
</dbReference>
<dbReference type="GO" id="GO:0005737">
    <property type="term" value="C:cytoplasm"/>
    <property type="evidence" value="ECO:0007669"/>
    <property type="project" value="UniProtKB-SubCell"/>
</dbReference>
<dbReference type="GO" id="GO:0004045">
    <property type="term" value="F:peptidyl-tRNA hydrolase activity"/>
    <property type="evidence" value="ECO:0007669"/>
    <property type="project" value="UniProtKB-UniRule"/>
</dbReference>
<dbReference type="GO" id="GO:0000049">
    <property type="term" value="F:tRNA binding"/>
    <property type="evidence" value="ECO:0007669"/>
    <property type="project" value="UniProtKB-UniRule"/>
</dbReference>
<dbReference type="GO" id="GO:0006515">
    <property type="term" value="P:protein quality control for misfolded or incompletely synthesized proteins"/>
    <property type="evidence" value="ECO:0007669"/>
    <property type="project" value="UniProtKB-UniRule"/>
</dbReference>
<dbReference type="GO" id="GO:0072344">
    <property type="term" value="P:rescue of stalled ribosome"/>
    <property type="evidence" value="ECO:0007669"/>
    <property type="project" value="UniProtKB-UniRule"/>
</dbReference>
<dbReference type="CDD" id="cd00462">
    <property type="entry name" value="PTH"/>
    <property type="match status" value="1"/>
</dbReference>
<dbReference type="FunFam" id="3.40.50.1470:FF:000001">
    <property type="entry name" value="Peptidyl-tRNA hydrolase"/>
    <property type="match status" value="1"/>
</dbReference>
<dbReference type="Gene3D" id="3.40.50.1470">
    <property type="entry name" value="Peptidyl-tRNA hydrolase"/>
    <property type="match status" value="1"/>
</dbReference>
<dbReference type="HAMAP" id="MF_00083">
    <property type="entry name" value="Pept_tRNA_hydro_bact"/>
    <property type="match status" value="1"/>
</dbReference>
<dbReference type="InterPro" id="IPR001328">
    <property type="entry name" value="Pept_tRNA_hydro"/>
</dbReference>
<dbReference type="InterPro" id="IPR018171">
    <property type="entry name" value="Pept_tRNA_hydro_CS"/>
</dbReference>
<dbReference type="InterPro" id="IPR036416">
    <property type="entry name" value="Pept_tRNA_hydro_sf"/>
</dbReference>
<dbReference type="NCBIfam" id="TIGR00447">
    <property type="entry name" value="pth"/>
    <property type="match status" value="1"/>
</dbReference>
<dbReference type="PANTHER" id="PTHR17224">
    <property type="entry name" value="PEPTIDYL-TRNA HYDROLASE"/>
    <property type="match status" value="1"/>
</dbReference>
<dbReference type="PANTHER" id="PTHR17224:SF1">
    <property type="entry name" value="PEPTIDYL-TRNA HYDROLASE"/>
    <property type="match status" value="1"/>
</dbReference>
<dbReference type="Pfam" id="PF01195">
    <property type="entry name" value="Pept_tRNA_hydro"/>
    <property type="match status" value="1"/>
</dbReference>
<dbReference type="SUPFAM" id="SSF53178">
    <property type="entry name" value="Peptidyl-tRNA hydrolase-like"/>
    <property type="match status" value="1"/>
</dbReference>
<dbReference type="PROSITE" id="PS01195">
    <property type="entry name" value="PEPT_TRNA_HYDROL_1"/>
    <property type="match status" value="1"/>
</dbReference>
<reference key="1">
    <citation type="journal article" date="2008" name="Biol. Direct">
        <title>Complete genome sequence of the extremely acidophilic methanotroph isolate V4, Methylacidiphilum infernorum, a representative of the bacterial phylum Verrucomicrobia.</title>
        <authorList>
            <person name="Hou S."/>
            <person name="Makarova K.S."/>
            <person name="Saw J.H."/>
            <person name="Senin P."/>
            <person name="Ly B.V."/>
            <person name="Zhou Z."/>
            <person name="Ren Y."/>
            <person name="Wang J."/>
            <person name="Galperin M.Y."/>
            <person name="Omelchenko M.V."/>
            <person name="Wolf Y.I."/>
            <person name="Yutin N."/>
            <person name="Koonin E.V."/>
            <person name="Stott M.B."/>
            <person name="Mountain B.W."/>
            <person name="Crowe M.A."/>
            <person name="Smirnova A.V."/>
            <person name="Dunfield P.F."/>
            <person name="Feng L."/>
            <person name="Wang L."/>
            <person name="Alam M."/>
        </authorList>
    </citation>
    <scope>NUCLEOTIDE SEQUENCE [LARGE SCALE GENOMIC DNA]</scope>
    <source>
        <strain>Isolate V4</strain>
    </source>
</reference>
<evidence type="ECO:0000255" key="1">
    <source>
        <dbReference type="HAMAP-Rule" id="MF_00083"/>
    </source>
</evidence>
<comment type="function">
    <text evidence="1">Hydrolyzes ribosome-free peptidyl-tRNAs (with 1 or more amino acids incorporated), which drop off the ribosome during protein synthesis, or as a result of ribosome stalling.</text>
</comment>
<comment type="function">
    <text evidence="1">Catalyzes the release of premature peptidyl moieties from peptidyl-tRNA molecules trapped in stalled 50S ribosomal subunits, and thus maintains levels of free tRNAs and 50S ribosomes.</text>
</comment>
<comment type="catalytic activity">
    <reaction evidence="1">
        <text>an N-acyl-L-alpha-aminoacyl-tRNA + H2O = an N-acyl-L-amino acid + a tRNA + H(+)</text>
        <dbReference type="Rhea" id="RHEA:54448"/>
        <dbReference type="Rhea" id="RHEA-COMP:10123"/>
        <dbReference type="Rhea" id="RHEA-COMP:13883"/>
        <dbReference type="ChEBI" id="CHEBI:15377"/>
        <dbReference type="ChEBI" id="CHEBI:15378"/>
        <dbReference type="ChEBI" id="CHEBI:59874"/>
        <dbReference type="ChEBI" id="CHEBI:78442"/>
        <dbReference type="ChEBI" id="CHEBI:138191"/>
        <dbReference type="EC" id="3.1.1.29"/>
    </reaction>
</comment>
<comment type="subunit">
    <text evidence="1">Monomer.</text>
</comment>
<comment type="subcellular location">
    <subcellularLocation>
        <location evidence="1">Cytoplasm</location>
    </subcellularLocation>
</comment>
<comment type="similarity">
    <text evidence="1">Belongs to the PTH family.</text>
</comment>
<feature type="chain" id="PRO_1000202591" description="Peptidyl-tRNA hydrolase">
    <location>
        <begin position="1"/>
        <end position="186"/>
    </location>
</feature>
<feature type="active site" description="Proton acceptor" evidence="1">
    <location>
        <position position="22"/>
    </location>
</feature>
<feature type="binding site" evidence="1">
    <location>
        <position position="17"/>
    </location>
    <ligand>
        <name>tRNA</name>
        <dbReference type="ChEBI" id="CHEBI:17843"/>
    </ligand>
</feature>
<feature type="binding site" evidence="1">
    <location>
        <position position="64"/>
    </location>
    <ligand>
        <name>tRNA</name>
        <dbReference type="ChEBI" id="CHEBI:17843"/>
    </ligand>
</feature>
<feature type="binding site" evidence="1">
    <location>
        <position position="66"/>
    </location>
    <ligand>
        <name>tRNA</name>
        <dbReference type="ChEBI" id="CHEBI:17843"/>
    </ligand>
</feature>
<feature type="site" description="Discriminates between blocked and unblocked aminoacyl-tRNA" evidence="1">
    <location>
        <position position="12"/>
    </location>
</feature>
<feature type="site" description="Stabilizes the basic form of H active site to accept a proton" evidence="1">
    <location>
        <position position="91"/>
    </location>
</feature>
<name>PTH_METI4</name>